<protein>
    <recommendedName>
        <fullName evidence="3">Small ribosomal subunit protein mS26</fullName>
    </recommendedName>
</protein>
<dbReference type="EMBL" id="CM002236">
    <property type="protein sequence ID" value="EAA36440.1"/>
    <property type="molecule type" value="Genomic_DNA"/>
</dbReference>
<dbReference type="RefSeq" id="XP_965676.1">
    <property type="nucleotide sequence ID" value="XM_960583.3"/>
</dbReference>
<dbReference type="PDB" id="6YW5">
    <property type="method" value="EM"/>
    <property type="resolution" value="2.85 A"/>
    <property type="chains" value="VV=1-316"/>
</dbReference>
<dbReference type="PDB" id="6YWE">
    <property type="method" value="EM"/>
    <property type="resolution" value="2.99 A"/>
    <property type="chains" value="VV=1-316"/>
</dbReference>
<dbReference type="PDB" id="6YWX">
    <property type="method" value="EM"/>
    <property type="resolution" value="3.10 A"/>
    <property type="chains" value="VV=1-316"/>
</dbReference>
<dbReference type="PDB" id="6YWY">
    <property type="method" value="EM"/>
    <property type="resolution" value="3.05 A"/>
    <property type="chains" value="VV=1-316"/>
</dbReference>
<dbReference type="PDBsum" id="6YW5"/>
<dbReference type="PDBsum" id="6YWE"/>
<dbReference type="PDBsum" id="6YWX"/>
<dbReference type="PDBsum" id="6YWY"/>
<dbReference type="EMDB" id="EMD-10958"/>
<dbReference type="EMDB" id="EMD-10965"/>
<dbReference type="EMDB" id="EMD-10978"/>
<dbReference type="EMDB" id="EMD-10985"/>
<dbReference type="SMR" id="Q7SHR9"/>
<dbReference type="STRING" id="367110.Q7SHR9"/>
<dbReference type="PaxDb" id="5141-EFNCRP00000001951"/>
<dbReference type="EnsemblFungi" id="EAA36440">
    <property type="protein sequence ID" value="EAA36440"/>
    <property type="gene ID" value="NCU02545"/>
</dbReference>
<dbReference type="GeneID" id="3881810"/>
<dbReference type="KEGG" id="ncr:NCU02545"/>
<dbReference type="VEuPathDB" id="FungiDB:NCU02545"/>
<dbReference type="HOGENOM" id="CLU_065203_0_0_1"/>
<dbReference type="InParanoid" id="Q7SHR9"/>
<dbReference type="OrthoDB" id="5223508at2759"/>
<dbReference type="Proteomes" id="UP000001805">
    <property type="component" value="Chromosome 1, Linkage Group I"/>
</dbReference>
<dbReference type="GO" id="GO:0005739">
    <property type="term" value="C:mitochondrion"/>
    <property type="evidence" value="ECO:0007669"/>
    <property type="project" value="UniProtKB-SubCell"/>
</dbReference>
<dbReference type="CDD" id="cd23703">
    <property type="entry name" value="mS26_PET12"/>
    <property type="match status" value="1"/>
</dbReference>
<feature type="chain" id="PRO_0000458567" description="Small ribosomal subunit protein mS26">
    <location>
        <begin position="1"/>
        <end position="316"/>
    </location>
</feature>
<feature type="region of interest" description="Disordered" evidence="1">
    <location>
        <begin position="41"/>
        <end position="71"/>
    </location>
</feature>
<evidence type="ECO:0000256" key="1">
    <source>
        <dbReference type="SAM" id="MobiDB-lite"/>
    </source>
</evidence>
<evidence type="ECO:0000269" key="2">
    <source>
    </source>
</evidence>
<evidence type="ECO:0000303" key="3">
    <source>
    </source>
</evidence>
<evidence type="ECO:0000305" key="4"/>
<evidence type="ECO:0000305" key="5">
    <source>
    </source>
</evidence>
<evidence type="ECO:0007744" key="6">
    <source>
        <dbReference type="PDB" id="6YW5"/>
    </source>
</evidence>
<evidence type="ECO:0007744" key="7">
    <source>
        <dbReference type="PDB" id="6YWE"/>
    </source>
</evidence>
<proteinExistence type="evidence at protein level"/>
<gene>
    <name type="primary">pet123</name>
    <name type="ORF">NCU02545</name>
</gene>
<name>RTPT_NEUCR</name>
<comment type="function">
    <text evidence="5">Component of the mitochondrial ribosome (mitoribosome), a dedicated translation machinery responsible for the synthesis of mitochondrial genome-encoded proteins, including at least some of the essential transmembrane subunits of the mitochondrial respiratory chain. The mitoribosomes are attached to the mitochondrial inner membrane and translation products are cotranslationally integrated into the membrane.</text>
</comment>
<comment type="subunit">
    <text evidence="2">Component of the mitochondrial small ribosomal subunit (mt-SSU). Mature N.crassa 74S mitochondrial ribosomes consist of a small (37S) and a large (54S) subunit. The 37S small subunit contains a 16S ribosomal RNA (16S mt-rRNA) and 32 different proteins. The 54S large subunit contains a 23S rRNA (23S mt-rRNA) and 42 different proteins.</text>
</comment>
<comment type="subcellular location">
    <subcellularLocation>
        <location evidence="2">Mitochondrion</location>
    </subcellularLocation>
</comment>
<comment type="similarity">
    <text evidence="4">Belongs to the mitochondrion-specific ribosomal protein mS26 family.</text>
</comment>
<sequence>MAPTLARPSLSGVQFILSSPTTTCAATSVVTRAIAARSFSTTRSARDSVSIPPDSPNYIKVPEPPQSSEVRHPFVKGHLPIPRSIFPKKGVPEKVQSGYVNRIAPKSAAELAGLPPKSKQESWRRKMAEARRQSLEAGLQGLWQRKVKRDQKQAKESKARYLANKRAAQAPERLDEVFTRATIRESTAKNTFVPLDPEAFVKAEEARIKHAEKEAMKSEARRDAVVQLYVASKNFIVDEKELEEHVNKHFTEKIHNAGLWESGRSIWDSQKNPISMRELRNEFSGFNDRVTATTSAAVKTTVRQKNVAEELTGGKL</sequence>
<organism>
    <name type="scientific">Neurospora crassa (strain ATCC 24698 / 74-OR23-1A / CBS 708.71 / DSM 1257 / FGSC 987)</name>
    <dbReference type="NCBI Taxonomy" id="367110"/>
    <lineage>
        <taxon>Eukaryota</taxon>
        <taxon>Fungi</taxon>
        <taxon>Dikarya</taxon>
        <taxon>Ascomycota</taxon>
        <taxon>Pezizomycotina</taxon>
        <taxon>Sordariomycetes</taxon>
        <taxon>Sordariomycetidae</taxon>
        <taxon>Sordariales</taxon>
        <taxon>Sordariaceae</taxon>
        <taxon>Neurospora</taxon>
    </lineage>
</organism>
<accession>Q7SHR9</accession>
<keyword id="KW-0002">3D-structure</keyword>
<keyword id="KW-0496">Mitochondrion</keyword>
<keyword id="KW-1185">Reference proteome</keyword>
<reference key="1">
    <citation type="journal article" date="2003" name="Nature">
        <title>The genome sequence of the filamentous fungus Neurospora crassa.</title>
        <authorList>
            <person name="Galagan J.E."/>
            <person name="Calvo S.E."/>
            <person name="Borkovich K.A."/>
            <person name="Selker E.U."/>
            <person name="Read N.D."/>
            <person name="Jaffe D.B."/>
            <person name="FitzHugh W."/>
            <person name="Ma L.-J."/>
            <person name="Smirnov S."/>
            <person name="Purcell S."/>
            <person name="Rehman B."/>
            <person name="Elkins T."/>
            <person name="Engels R."/>
            <person name="Wang S."/>
            <person name="Nielsen C.B."/>
            <person name="Butler J."/>
            <person name="Endrizzi M."/>
            <person name="Qui D."/>
            <person name="Ianakiev P."/>
            <person name="Bell-Pedersen D."/>
            <person name="Nelson M.A."/>
            <person name="Werner-Washburne M."/>
            <person name="Selitrennikoff C.P."/>
            <person name="Kinsey J.A."/>
            <person name="Braun E.L."/>
            <person name="Zelter A."/>
            <person name="Schulte U."/>
            <person name="Kothe G.O."/>
            <person name="Jedd G."/>
            <person name="Mewes H.-W."/>
            <person name="Staben C."/>
            <person name="Marcotte E."/>
            <person name="Greenberg D."/>
            <person name="Roy A."/>
            <person name="Foley K."/>
            <person name="Naylor J."/>
            <person name="Stange-Thomann N."/>
            <person name="Barrett R."/>
            <person name="Gnerre S."/>
            <person name="Kamal M."/>
            <person name="Kamvysselis M."/>
            <person name="Mauceli E.W."/>
            <person name="Bielke C."/>
            <person name="Rudd S."/>
            <person name="Frishman D."/>
            <person name="Krystofova S."/>
            <person name="Rasmussen C."/>
            <person name="Metzenberg R.L."/>
            <person name="Perkins D.D."/>
            <person name="Kroken S."/>
            <person name="Cogoni C."/>
            <person name="Macino G."/>
            <person name="Catcheside D.E.A."/>
            <person name="Li W."/>
            <person name="Pratt R.J."/>
            <person name="Osmani S.A."/>
            <person name="DeSouza C.P.C."/>
            <person name="Glass N.L."/>
            <person name="Orbach M.J."/>
            <person name="Berglund J.A."/>
            <person name="Voelker R."/>
            <person name="Yarden O."/>
            <person name="Plamann M."/>
            <person name="Seiler S."/>
            <person name="Dunlap J.C."/>
            <person name="Radford A."/>
            <person name="Aramayo R."/>
            <person name="Natvig D.O."/>
            <person name="Alex L.A."/>
            <person name="Mannhaupt G."/>
            <person name="Ebbole D.J."/>
            <person name="Freitag M."/>
            <person name="Paulsen I."/>
            <person name="Sachs M.S."/>
            <person name="Lander E.S."/>
            <person name="Nusbaum C."/>
            <person name="Birren B.W."/>
        </authorList>
    </citation>
    <scope>NUCLEOTIDE SEQUENCE [LARGE SCALE GENOMIC DNA]</scope>
    <source>
        <strain>ATCC 24698 / 74-OR23-1A / CBS 708.71 / DSM 1257 / FGSC 987</strain>
    </source>
</reference>
<reference evidence="6 7" key="2">
    <citation type="journal article" date="2020" name="Nat. Commun.">
        <title>Analysis of translating mitoribosome reveals functional characteristics of translation in mitochondria of fungi.</title>
        <authorList>
            <person name="Itoh Y."/>
            <person name="Naschberger A."/>
            <person name="Mortezaei N."/>
            <person name="Herrmann J.M."/>
            <person name="Amunts A."/>
        </authorList>
    </citation>
    <scope>STRUCTURE BY ELECTRON MICROSCOPY (2.85 ANGSTROMS)</scope>
</reference>